<keyword id="KW-1185">Reference proteome</keyword>
<accession>P9WIE8</accession>
<accession>L0TD09</accession>
<accession>Q50630</accession>
<comment type="similarity">
    <text evidence="3">Belongs to the mycobacterial PE family. PGRS subfamily.</text>
</comment>
<comment type="sequence caution" evidence="3">
    <conflict type="erroneous initiation">
        <sequence resource="EMBL-CDS" id="AAK46982"/>
    </conflict>
</comment>
<proteinExistence type="inferred from homology"/>
<name>PG44_MYCTO</name>
<gene>
    <name type="primary">PE_PGRS44</name>
    <name type="ordered locus">MT2668.1</name>
</gene>
<feature type="chain" id="PRO_0000428019" description="Uncharacterized PE-PGRS family protein PE_PGRS44">
    <location>
        <begin position="1"/>
        <end position="543"/>
    </location>
</feature>
<feature type="domain" description="PE" evidence="1">
    <location>
        <begin position="1"/>
        <end position="93"/>
    </location>
</feature>
<feature type="region of interest" description="Disordered" evidence="2">
    <location>
        <begin position="194"/>
        <end position="214"/>
    </location>
</feature>
<organism>
    <name type="scientific">Mycobacterium tuberculosis (strain CDC 1551 / Oshkosh)</name>
    <dbReference type="NCBI Taxonomy" id="83331"/>
    <lineage>
        <taxon>Bacteria</taxon>
        <taxon>Bacillati</taxon>
        <taxon>Actinomycetota</taxon>
        <taxon>Actinomycetes</taxon>
        <taxon>Mycobacteriales</taxon>
        <taxon>Mycobacteriaceae</taxon>
        <taxon>Mycobacterium</taxon>
        <taxon>Mycobacterium tuberculosis complex</taxon>
    </lineage>
</organism>
<protein>
    <recommendedName>
        <fullName>Uncharacterized PE-PGRS family protein PE_PGRS44</fullName>
    </recommendedName>
</protein>
<reference key="1">
    <citation type="journal article" date="2002" name="J. Bacteriol.">
        <title>Whole-genome comparison of Mycobacterium tuberculosis clinical and laboratory strains.</title>
        <authorList>
            <person name="Fleischmann R.D."/>
            <person name="Alland D."/>
            <person name="Eisen J.A."/>
            <person name="Carpenter L."/>
            <person name="White O."/>
            <person name="Peterson J.D."/>
            <person name="DeBoy R.T."/>
            <person name="Dodson R.J."/>
            <person name="Gwinn M.L."/>
            <person name="Haft D.H."/>
            <person name="Hickey E.K."/>
            <person name="Kolonay J.F."/>
            <person name="Nelson W.C."/>
            <person name="Umayam L.A."/>
            <person name="Ermolaeva M.D."/>
            <person name="Salzberg S.L."/>
            <person name="Delcher A."/>
            <person name="Utterback T.R."/>
            <person name="Weidman J.F."/>
            <person name="Khouri H.M."/>
            <person name="Gill J."/>
            <person name="Mikula A."/>
            <person name="Bishai W."/>
            <person name="Jacobs W.R. Jr."/>
            <person name="Venter J.C."/>
            <person name="Fraser C.M."/>
        </authorList>
    </citation>
    <scope>NUCLEOTIDE SEQUENCE [LARGE SCALE GENOMIC DNA]</scope>
    <source>
        <strain>CDC 1551 / Oshkosh</strain>
    </source>
</reference>
<sequence>MSFVTAAPEMLATAAQNVANIGTSLSAANATAAASTTSVLAAGADEVSQAIARLFSDYATHYQSLNAQAAAFHHSFVQTLNAAGGAYSSAEAANASAQALEQNLLAVINAPAQALFGRPLIGNGANGTAASPNGGDGGILYGNGGNGFSQTTAGVAGGAGGSAGLIGNGGNGGAGGAGAAGGAGGAGGWLLGNGGAGGPGGPTDVPAGTGGAGGAGGDAPLIGWGGNGGPGGFAAFGNGGAGGNGGASGSLFGVGGAGGVGGSSEDVGGTGGAGGAGRGLFLGLGGDGGAGGTSNNNGGDGGAGGTAGGRLFSLGGDGGNGGAGTAIGSNAGDGGAGGDSSALIGYAQGGSGGLGGFGESTGGDGGLGGAGAVLIGTGVGGFGGLGGGSNGTGGAGGAGGTGATLIGLGAGGGGGIGGFAVNVGNGVGGLGGQGGQGAALIGLGAGGAGGAGGATVVGLGGNGGDGGDGGGLFSIGVGGDGGNAGNGAMPANGGNGGNAGVIANGSFAPSFVGFGGNGGNGVNGGTGGSGGILFGANGANGPS</sequence>
<evidence type="ECO:0000255" key="1"/>
<evidence type="ECO:0000256" key="2">
    <source>
        <dbReference type="SAM" id="MobiDB-lite"/>
    </source>
</evidence>
<evidence type="ECO:0000305" key="3"/>
<dbReference type="EMBL" id="AE000516">
    <property type="protein sequence ID" value="AAK46982.1"/>
    <property type="status" value="ALT_INIT"/>
    <property type="molecule type" value="Genomic_DNA"/>
</dbReference>
<dbReference type="PIR" id="F70726">
    <property type="entry name" value="F70726"/>
</dbReference>
<dbReference type="RefSeq" id="WP_010886152.1">
    <property type="nucleotide sequence ID" value="NZ_KK341227.1"/>
</dbReference>
<dbReference type="SMR" id="P9WIE8"/>
<dbReference type="KEGG" id="mtc:MT2668.1"/>
<dbReference type="PATRIC" id="fig|83331.31.peg.2875"/>
<dbReference type="HOGENOM" id="CLU_000167_10_3_11"/>
<dbReference type="Proteomes" id="UP000001020">
    <property type="component" value="Chromosome"/>
</dbReference>
<dbReference type="Gene3D" id="1.10.287.850">
    <property type="entry name" value="HP0062-like domain"/>
    <property type="match status" value="1"/>
</dbReference>
<dbReference type="InterPro" id="IPR000084">
    <property type="entry name" value="PE-PGRS_N"/>
</dbReference>
<dbReference type="InterPro" id="IPR048996">
    <property type="entry name" value="PGRS_rpt"/>
</dbReference>
<dbReference type="Pfam" id="PF00934">
    <property type="entry name" value="PE"/>
    <property type="match status" value="1"/>
</dbReference>
<dbReference type="Pfam" id="PF21526">
    <property type="entry name" value="PGRS"/>
    <property type="match status" value="1"/>
</dbReference>
<dbReference type="SUPFAM" id="SSF140459">
    <property type="entry name" value="PE/PPE dimer-like"/>
    <property type="match status" value="1"/>
</dbReference>